<gene>
    <name type="primary">OXT</name>
    <name type="synonym">OT</name>
</gene>
<feature type="signal peptide" evidence="2">
    <location>
        <begin position="1"/>
        <end position="19"/>
    </location>
</feature>
<feature type="peptide" id="PRO_0000020495" description="Oxytocin" evidence="2">
    <location>
        <begin position="20"/>
        <end position="28"/>
    </location>
</feature>
<feature type="chain" id="PRO_0000020496" description="Neurophysin 1" evidence="4 5">
    <location>
        <begin position="32"/>
        <end position="125"/>
    </location>
</feature>
<feature type="modified residue" description="Glycine amide" evidence="2">
    <location>
        <position position="28"/>
    </location>
</feature>
<feature type="disulfide bond">
    <location>
        <begin position="20"/>
        <end position="25"/>
    </location>
</feature>
<feature type="disulfide bond" evidence="1">
    <location>
        <begin position="41"/>
        <end position="85"/>
    </location>
</feature>
<feature type="disulfide bond" evidence="1">
    <location>
        <begin position="44"/>
        <end position="58"/>
    </location>
</feature>
<feature type="disulfide bond" evidence="1">
    <location>
        <begin position="52"/>
        <end position="75"/>
    </location>
</feature>
<feature type="disulfide bond" evidence="1">
    <location>
        <begin position="59"/>
        <end position="65"/>
    </location>
</feature>
<feature type="disulfide bond" evidence="1">
    <location>
        <begin position="92"/>
        <end position="104"/>
    </location>
</feature>
<feature type="disulfide bond" evidence="1">
    <location>
        <begin position="98"/>
        <end position="116"/>
    </location>
</feature>
<feature type="disulfide bond" evidence="1">
    <location>
        <begin position="105"/>
        <end position="110"/>
    </location>
</feature>
<feature type="mutagenesis site" description="Gain of antagonist activity on V1aR/AVPR1A (and loss of agonist activity on this receptor). 310-fold decrease in affinity for oxytocin receptor (OXTR), 13-fold decrease in affinity for V1aR/AVPR1A, and complete loss of affinity for V1bR/AVPR1B and V2R/AVPR2." evidence="3">
    <original>G</original>
    <variation>V</variation>
    <location>
        <position position="28"/>
    </location>
</feature>
<feature type="sequence conflict" description="In Ref. 6; AAA59979." evidence="6" ref="6">
    <original>S</original>
    <variation>G</variation>
    <location>
        <position position="94"/>
    </location>
</feature>
<feature type="sequence conflict" description="In Ref. 9; AA sequence." evidence="6" ref="9">
    <original>VL</original>
    <variation>AA</variation>
    <location>
        <begin position="100"/>
        <end position="101"/>
    </location>
</feature>
<feature type="sequence conflict" description="In Ref. 2; AAA98806." evidence="6" ref="2">
    <location>
        <position position="100"/>
    </location>
</feature>
<feature type="sequence conflict" description="In Ref. 9; AA sequence." evidence="6" ref="9">
    <original>Q</original>
    <variation>L</variation>
    <location>
        <position position="124"/>
    </location>
</feature>
<feature type="strand" evidence="7">
    <location>
        <begin position="22"/>
        <end position="24"/>
    </location>
</feature>
<keyword id="KW-0002">3D-structure</keyword>
<keyword id="KW-0027">Amidation</keyword>
<keyword id="KW-0165">Cleavage on pair of basic residues</keyword>
<keyword id="KW-0903">Direct protein sequencing</keyword>
<keyword id="KW-1015">Disulfide bond</keyword>
<keyword id="KW-0372">Hormone</keyword>
<keyword id="KW-0582">Pharmaceutical</keyword>
<keyword id="KW-1267">Proteomics identification</keyword>
<keyword id="KW-1185">Reference proteome</keyword>
<keyword id="KW-0964">Secreted</keyword>
<keyword id="KW-0732">Signal</keyword>
<dbReference type="EMBL" id="M25650">
    <property type="protein sequence ID" value="AAA59977.1"/>
    <property type="molecule type" value="mRNA"/>
</dbReference>
<dbReference type="EMBL" id="M11186">
    <property type="protein sequence ID" value="AAA98806.1"/>
    <property type="molecule type" value="Genomic_DNA"/>
</dbReference>
<dbReference type="EMBL" id="AY082910">
    <property type="protein sequence ID" value="AAL92860.1"/>
    <property type="molecule type" value="Genomic_DNA"/>
</dbReference>
<dbReference type="EMBL" id="AL160414">
    <property type="status" value="NOT_ANNOTATED_CDS"/>
    <property type="molecule type" value="Genomic_DNA"/>
</dbReference>
<dbReference type="EMBL" id="BC069144">
    <property type="protein sequence ID" value="AAH69144.1"/>
    <property type="molecule type" value="mRNA"/>
</dbReference>
<dbReference type="EMBL" id="BC101841">
    <property type="protein sequence ID" value="AAI01842.1"/>
    <property type="molecule type" value="mRNA"/>
</dbReference>
<dbReference type="EMBL" id="BC101843">
    <property type="protein sequence ID" value="AAI01844.1"/>
    <property type="molecule type" value="mRNA"/>
</dbReference>
<dbReference type="EMBL" id="X03173">
    <property type="protein sequence ID" value="CAA26936.1"/>
    <property type="molecule type" value="mRNA"/>
</dbReference>
<dbReference type="EMBL" id="M62611">
    <property type="protein sequence ID" value="AAA59979.1"/>
    <property type="molecule type" value="mRNA"/>
</dbReference>
<dbReference type="CCDS" id="CCDS13044.1"/>
<dbReference type="PIR" id="A94676">
    <property type="entry name" value="NFHU1"/>
</dbReference>
<dbReference type="RefSeq" id="NP_000906.1">
    <property type="nucleotide sequence ID" value="NM_000915.4"/>
</dbReference>
<dbReference type="RefSeq" id="XP_011527540.1">
    <property type="nucleotide sequence ID" value="XM_011529238.1"/>
</dbReference>
<dbReference type="RefSeq" id="XP_054179442.1">
    <property type="nucleotide sequence ID" value="XM_054323467.1"/>
</dbReference>
<dbReference type="PDB" id="7OFG">
    <property type="method" value="NMR"/>
    <property type="chains" value="A=20-28"/>
</dbReference>
<dbReference type="PDB" id="7OTD">
    <property type="method" value="NMR"/>
    <property type="chains" value="A=20-28"/>
</dbReference>
<dbReference type="PDB" id="7QVM">
    <property type="method" value="EM"/>
    <property type="resolution" value="3.25 A"/>
    <property type="chains" value="L=20-28"/>
</dbReference>
<dbReference type="PDB" id="7RYC">
    <property type="method" value="EM"/>
    <property type="resolution" value="2.90 A"/>
    <property type="chains" value="L=20-28"/>
</dbReference>
<dbReference type="PDBsum" id="7OFG"/>
<dbReference type="PDBsum" id="7OTD"/>
<dbReference type="PDBsum" id="7QVM"/>
<dbReference type="PDBsum" id="7RYC"/>
<dbReference type="EMDB" id="EMD-14180"/>
<dbReference type="EMDB" id="EMD-24733"/>
<dbReference type="SMR" id="P01178"/>
<dbReference type="BioGRID" id="111060">
    <property type="interactions" value="21"/>
</dbReference>
<dbReference type="FunCoup" id="P01178">
    <property type="interactions" value="689"/>
</dbReference>
<dbReference type="IntAct" id="P01178">
    <property type="interactions" value="7"/>
</dbReference>
<dbReference type="STRING" id="9606.ENSP00000217386"/>
<dbReference type="ChEMBL" id="CHEMBL5169107"/>
<dbReference type="DrugBank" id="DB00107">
    <property type="generic name" value="Oxytocin"/>
</dbReference>
<dbReference type="DrugCentral" id="P01178"/>
<dbReference type="BioMuta" id="OXT"/>
<dbReference type="DMDM" id="128071"/>
<dbReference type="MassIVE" id="P01178"/>
<dbReference type="PaxDb" id="9606-ENSP00000217386"/>
<dbReference type="PeptideAtlas" id="P01178"/>
<dbReference type="ProteomicsDB" id="51341"/>
<dbReference type="Antibodypedia" id="7257">
    <property type="antibodies" value="249 antibodies from 35 providers"/>
</dbReference>
<dbReference type="DNASU" id="5020"/>
<dbReference type="Ensembl" id="ENST00000217386.2">
    <property type="protein sequence ID" value="ENSP00000217386.2"/>
    <property type="gene ID" value="ENSG00000101405.3"/>
</dbReference>
<dbReference type="GeneID" id="5020"/>
<dbReference type="KEGG" id="hsa:5020"/>
<dbReference type="MANE-Select" id="ENST00000217386.2">
    <property type="protein sequence ID" value="ENSP00000217386.2"/>
    <property type="RefSeq nucleotide sequence ID" value="NM_000915.4"/>
    <property type="RefSeq protein sequence ID" value="NP_000906.1"/>
</dbReference>
<dbReference type="AGR" id="HGNC:8528"/>
<dbReference type="CTD" id="5020"/>
<dbReference type="DisGeNET" id="5020"/>
<dbReference type="GeneCards" id="OXT"/>
<dbReference type="HGNC" id="HGNC:8528">
    <property type="gene designation" value="OXT"/>
</dbReference>
<dbReference type="HPA" id="ENSG00000101405">
    <property type="expression patterns" value="Tissue enriched (brain)"/>
</dbReference>
<dbReference type="MIM" id="167050">
    <property type="type" value="gene"/>
</dbReference>
<dbReference type="neXtProt" id="NX_P01178"/>
<dbReference type="OpenTargets" id="ENSG00000101405"/>
<dbReference type="PharmGKB" id="PA32857"/>
<dbReference type="VEuPathDB" id="HostDB:ENSG00000101405"/>
<dbReference type="eggNOG" id="ENOG502S2CT">
    <property type="taxonomic scope" value="Eukaryota"/>
</dbReference>
<dbReference type="GeneTree" id="ENSGT00390000004511"/>
<dbReference type="HOGENOM" id="CLU_125770_1_0_1"/>
<dbReference type="InParanoid" id="P01178"/>
<dbReference type="OMA" id="ACVINDP"/>
<dbReference type="OrthoDB" id="10056056at2759"/>
<dbReference type="PAN-GO" id="P01178">
    <property type="GO annotations" value="4 GO annotations based on evolutionary models"/>
</dbReference>
<dbReference type="PhylomeDB" id="P01178"/>
<dbReference type="TreeFam" id="TF333018"/>
<dbReference type="PathwayCommons" id="P01178"/>
<dbReference type="Reactome" id="R-HSA-388479">
    <property type="pathway name" value="Vasopressin-like receptors"/>
</dbReference>
<dbReference type="Reactome" id="R-HSA-416476">
    <property type="pathway name" value="G alpha (q) signalling events"/>
</dbReference>
<dbReference type="SignaLink" id="P01178"/>
<dbReference type="SIGNOR" id="P01178"/>
<dbReference type="BioGRID-ORCS" id="5020">
    <property type="hits" value="11 hits in 1146 CRISPR screens"/>
</dbReference>
<dbReference type="GeneWiki" id="Neurophysin_I"/>
<dbReference type="GeneWiki" id="Oxytocin"/>
<dbReference type="GenomeRNAi" id="5020"/>
<dbReference type="Pharos" id="P01178">
    <property type="development level" value="Tbio"/>
</dbReference>
<dbReference type="PRO" id="PR:P01178"/>
<dbReference type="Proteomes" id="UP000005640">
    <property type="component" value="Chromosome 20"/>
</dbReference>
<dbReference type="RNAct" id="P01178">
    <property type="molecule type" value="protein"/>
</dbReference>
<dbReference type="Bgee" id="ENSG00000101405">
    <property type="expression patterns" value="Expressed in oocyte and 104 other cell types or tissues"/>
</dbReference>
<dbReference type="ExpressionAtlas" id="P01178">
    <property type="expression patterns" value="baseline and differential"/>
</dbReference>
<dbReference type="GO" id="GO:0005576">
    <property type="term" value="C:extracellular region"/>
    <property type="evidence" value="ECO:0000304"/>
    <property type="project" value="Reactome"/>
</dbReference>
<dbReference type="GO" id="GO:0005615">
    <property type="term" value="C:extracellular space"/>
    <property type="evidence" value="ECO:0000318"/>
    <property type="project" value="GO_Central"/>
</dbReference>
<dbReference type="GO" id="GO:0098992">
    <property type="term" value="C:neuronal dense core vesicle"/>
    <property type="evidence" value="ECO:0007669"/>
    <property type="project" value="Ensembl"/>
</dbReference>
<dbReference type="GO" id="GO:0030141">
    <property type="term" value="C:secretory granule"/>
    <property type="evidence" value="ECO:0000318"/>
    <property type="project" value="GO_Central"/>
</dbReference>
<dbReference type="GO" id="GO:0043195">
    <property type="term" value="C:terminal bouton"/>
    <property type="evidence" value="ECO:0007669"/>
    <property type="project" value="Ensembl"/>
</dbReference>
<dbReference type="GO" id="GO:0005185">
    <property type="term" value="F:neurohypophyseal hormone activity"/>
    <property type="evidence" value="ECO:0007669"/>
    <property type="project" value="InterPro"/>
</dbReference>
<dbReference type="GO" id="GO:0005184">
    <property type="term" value="F:neuropeptide hormone activity"/>
    <property type="evidence" value="ECO:0000318"/>
    <property type="project" value="GO_Central"/>
</dbReference>
<dbReference type="GO" id="GO:0031855">
    <property type="term" value="F:oxytocin receptor binding"/>
    <property type="evidence" value="ECO:0000318"/>
    <property type="project" value="GO_Central"/>
</dbReference>
<dbReference type="GO" id="GO:0031894">
    <property type="term" value="F:V1A vasopressin receptor binding"/>
    <property type="evidence" value="ECO:0000318"/>
    <property type="project" value="GO_Central"/>
</dbReference>
<dbReference type="GO" id="GO:0042756">
    <property type="term" value="P:drinking behavior"/>
    <property type="evidence" value="ECO:0007669"/>
    <property type="project" value="Ensembl"/>
</dbReference>
<dbReference type="GO" id="GO:0042755">
    <property type="term" value="P:eating behavior"/>
    <property type="evidence" value="ECO:0007669"/>
    <property type="project" value="Ensembl"/>
</dbReference>
<dbReference type="GO" id="GO:0007565">
    <property type="term" value="P:female pregnancy"/>
    <property type="evidence" value="ECO:0007669"/>
    <property type="project" value="Ensembl"/>
</dbReference>
<dbReference type="GO" id="GO:0007625">
    <property type="term" value="P:grooming behavior"/>
    <property type="evidence" value="ECO:0007669"/>
    <property type="project" value="Ensembl"/>
</dbReference>
<dbReference type="GO" id="GO:0007507">
    <property type="term" value="P:heart development"/>
    <property type="evidence" value="ECO:0007669"/>
    <property type="project" value="Ensembl"/>
</dbReference>
<dbReference type="GO" id="GO:0060179">
    <property type="term" value="P:male mating behavior"/>
    <property type="evidence" value="ECO:0007669"/>
    <property type="project" value="Ensembl"/>
</dbReference>
<dbReference type="GO" id="GO:0002125">
    <property type="term" value="P:maternal aggressive behavior"/>
    <property type="evidence" value="ECO:0007669"/>
    <property type="project" value="Ensembl"/>
</dbReference>
<dbReference type="GO" id="GO:0042711">
    <property type="term" value="P:maternal behavior"/>
    <property type="evidence" value="ECO:0007669"/>
    <property type="project" value="Ensembl"/>
</dbReference>
<dbReference type="GO" id="GO:0007613">
    <property type="term" value="P:memory"/>
    <property type="evidence" value="ECO:0007669"/>
    <property type="project" value="Ensembl"/>
</dbReference>
<dbReference type="GO" id="GO:0045776">
    <property type="term" value="P:negative regulation of blood pressure"/>
    <property type="evidence" value="ECO:0007669"/>
    <property type="project" value="Ensembl"/>
</dbReference>
<dbReference type="GO" id="GO:0035811">
    <property type="term" value="P:negative regulation of urine volume"/>
    <property type="evidence" value="ECO:0007669"/>
    <property type="project" value="Ensembl"/>
</dbReference>
<dbReference type="GO" id="GO:0045777">
    <property type="term" value="P:positive regulation of blood pressure"/>
    <property type="evidence" value="ECO:0007669"/>
    <property type="project" value="Ensembl"/>
</dbReference>
<dbReference type="GO" id="GO:0120162">
    <property type="term" value="P:positive regulation of cold-induced thermogenesis"/>
    <property type="evidence" value="ECO:0000250"/>
    <property type="project" value="YuBioLab"/>
</dbReference>
<dbReference type="GO" id="GO:0007204">
    <property type="term" value="P:positive regulation of cytosolic calcium ion concentration"/>
    <property type="evidence" value="ECO:0007669"/>
    <property type="project" value="Ensembl"/>
</dbReference>
<dbReference type="GO" id="GO:0045925">
    <property type="term" value="P:positive regulation of female receptivity"/>
    <property type="evidence" value="ECO:0007669"/>
    <property type="project" value="Ensembl"/>
</dbReference>
<dbReference type="GO" id="GO:0060450">
    <property type="term" value="P:positive regulation of hindgut contraction"/>
    <property type="evidence" value="ECO:0007669"/>
    <property type="project" value="Ensembl"/>
</dbReference>
<dbReference type="GO" id="GO:0010701">
    <property type="term" value="P:positive regulation of norepinephrine secretion"/>
    <property type="evidence" value="ECO:0007669"/>
    <property type="project" value="Ensembl"/>
</dbReference>
<dbReference type="GO" id="GO:0045778">
    <property type="term" value="P:positive regulation of ossification"/>
    <property type="evidence" value="ECO:0007669"/>
    <property type="project" value="Ensembl"/>
</dbReference>
<dbReference type="GO" id="GO:0060406">
    <property type="term" value="P:positive regulation of penile erection"/>
    <property type="evidence" value="ECO:0007669"/>
    <property type="project" value="Ensembl"/>
</dbReference>
<dbReference type="GO" id="GO:0032308">
    <property type="term" value="P:positive regulation of prostaglandin secretion"/>
    <property type="evidence" value="ECO:0007669"/>
    <property type="project" value="Ensembl"/>
</dbReference>
<dbReference type="GO" id="GO:0051965">
    <property type="term" value="P:positive regulation of synapse assembly"/>
    <property type="evidence" value="ECO:0007669"/>
    <property type="project" value="Ensembl"/>
</dbReference>
<dbReference type="GO" id="GO:0050806">
    <property type="term" value="P:positive regulation of synaptic transmission"/>
    <property type="evidence" value="ECO:0007669"/>
    <property type="project" value="Ensembl"/>
</dbReference>
<dbReference type="GO" id="GO:0070474">
    <property type="term" value="P:positive regulation of uterine smooth muscle contraction"/>
    <property type="evidence" value="ECO:0007669"/>
    <property type="project" value="Ensembl"/>
</dbReference>
<dbReference type="GO" id="GO:0002027">
    <property type="term" value="P:regulation of heart rate"/>
    <property type="evidence" value="ECO:0007669"/>
    <property type="project" value="Ensembl"/>
</dbReference>
<dbReference type="GO" id="GO:0014823">
    <property type="term" value="P:response to activity"/>
    <property type="evidence" value="ECO:0007669"/>
    <property type="project" value="Ensembl"/>
</dbReference>
<dbReference type="GO" id="GO:0001975">
    <property type="term" value="P:response to amphetamine"/>
    <property type="evidence" value="ECO:0007669"/>
    <property type="project" value="Ensembl"/>
</dbReference>
<dbReference type="GO" id="GO:0051591">
    <property type="term" value="P:response to cAMP"/>
    <property type="evidence" value="ECO:0007669"/>
    <property type="project" value="Ensembl"/>
</dbReference>
<dbReference type="GO" id="GO:0042220">
    <property type="term" value="P:response to cocaine"/>
    <property type="evidence" value="ECO:0007669"/>
    <property type="project" value="Ensembl"/>
</dbReference>
<dbReference type="GO" id="GO:0051602">
    <property type="term" value="P:response to electrical stimulus"/>
    <property type="evidence" value="ECO:0007669"/>
    <property type="project" value="Ensembl"/>
</dbReference>
<dbReference type="GO" id="GO:0032355">
    <property type="term" value="P:response to estradiol"/>
    <property type="evidence" value="ECO:0007669"/>
    <property type="project" value="Ensembl"/>
</dbReference>
<dbReference type="GO" id="GO:0045472">
    <property type="term" value="P:response to ether"/>
    <property type="evidence" value="ECO:0007669"/>
    <property type="project" value="Ensembl"/>
</dbReference>
<dbReference type="GO" id="GO:0032094">
    <property type="term" value="P:response to food"/>
    <property type="evidence" value="ECO:0007669"/>
    <property type="project" value="Ensembl"/>
</dbReference>
<dbReference type="GO" id="GO:0051384">
    <property type="term" value="P:response to glucocorticoid"/>
    <property type="evidence" value="ECO:0007669"/>
    <property type="project" value="Ensembl"/>
</dbReference>
<dbReference type="GO" id="GO:0043434">
    <property type="term" value="P:response to peptide hormone"/>
    <property type="evidence" value="ECO:0007669"/>
    <property type="project" value="Ensembl"/>
</dbReference>
<dbReference type="GO" id="GO:0032570">
    <property type="term" value="P:response to progesterone"/>
    <property type="evidence" value="ECO:0007669"/>
    <property type="project" value="Ensembl"/>
</dbReference>
<dbReference type="GO" id="GO:0034695">
    <property type="term" value="P:response to prostaglandin E"/>
    <property type="evidence" value="ECO:0007669"/>
    <property type="project" value="Ensembl"/>
</dbReference>
<dbReference type="GO" id="GO:0032526">
    <property type="term" value="P:response to retinoic acid"/>
    <property type="evidence" value="ECO:0007669"/>
    <property type="project" value="Ensembl"/>
</dbReference>
<dbReference type="GO" id="GO:0009744">
    <property type="term" value="P:response to sucrose"/>
    <property type="evidence" value="ECO:0007669"/>
    <property type="project" value="Ensembl"/>
</dbReference>
<dbReference type="GO" id="GO:0007165">
    <property type="term" value="P:signal transduction"/>
    <property type="evidence" value="ECO:0000304"/>
    <property type="project" value="ProtInc"/>
</dbReference>
<dbReference type="GO" id="GO:0035176">
    <property type="term" value="P:social behavior"/>
    <property type="evidence" value="ECO:0007669"/>
    <property type="project" value="Ensembl"/>
</dbReference>
<dbReference type="GO" id="GO:0042713">
    <property type="term" value="P:sperm ejaculation"/>
    <property type="evidence" value="ECO:0007669"/>
    <property type="project" value="Ensembl"/>
</dbReference>
<dbReference type="FunFam" id="2.60.9.10:FF:000001">
    <property type="entry name" value="oxytocin-neurophysin 1"/>
    <property type="match status" value="1"/>
</dbReference>
<dbReference type="Gene3D" id="2.60.9.10">
    <property type="entry name" value="Neurohypophysial hormone domain"/>
    <property type="match status" value="1"/>
</dbReference>
<dbReference type="InterPro" id="IPR000981">
    <property type="entry name" value="Neurhyp_horm"/>
</dbReference>
<dbReference type="InterPro" id="IPR036387">
    <property type="entry name" value="Neurhyp_horm_dom_sf"/>
</dbReference>
<dbReference type="InterPro" id="IPR022423">
    <property type="entry name" value="Neurohypophysial_hormone_CS"/>
</dbReference>
<dbReference type="PANTHER" id="PTHR11681">
    <property type="entry name" value="NEUROPHYSIN"/>
    <property type="match status" value="1"/>
</dbReference>
<dbReference type="PANTHER" id="PTHR11681:SF2">
    <property type="entry name" value="OXYTOCIN-NEUROPHYSIN 1"/>
    <property type="match status" value="1"/>
</dbReference>
<dbReference type="Pfam" id="PF00220">
    <property type="entry name" value="Hormone_4"/>
    <property type="match status" value="1"/>
</dbReference>
<dbReference type="Pfam" id="PF00184">
    <property type="entry name" value="Hormone_5"/>
    <property type="match status" value="1"/>
</dbReference>
<dbReference type="PIRSF" id="PIRSF001815">
    <property type="entry name" value="Nonapeptide_hormone_precursor"/>
    <property type="match status" value="1"/>
</dbReference>
<dbReference type="PRINTS" id="PR00831">
    <property type="entry name" value="NEUROPHYSIN"/>
</dbReference>
<dbReference type="SMART" id="SM00003">
    <property type="entry name" value="NH"/>
    <property type="match status" value="1"/>
</dbReference>
<dbReference type="SUPFAM" id="SSF49606">
    <property type="entry name" value="Neurophysin II"/>
    <property type="match status" value="1"/>
</dbReference>
<dbReference type="PROSITE" id="PS00264">
    <property type="entry name" value="NEUROHYPOPHYS_HORM"/>
    <property type="match status" value="1"/>
</dbReference>
<comment type="function">
    <text>Neurophysin 1 specifically binds oxytocin.</text>
</comment>
<comment type="function">
    <text evidence="3">Oxytocin causes contraction of the smooth muscle of the uterus and of the mammary gland. Acts by binding to oxytocin receptor (OXTR) (PubMed:18174156).</text>
</comment>
<comment type="subunit">
    <text evidence="3">Interacts with oxytocin receptor (Ki=1.5 nM) (PubMed:18174156). Interacts with vasopressin V1aR/AVPR1A (Ki=37 nM), V1bR/AVPR1B (Ki=222 nM) and V2R/AVPR2 receptors (Ki=823 nM) (PubMed:18174156).</text>
</comment>
<comment type="interaction">
    <interactant intactId="EBI-1762651">
        <id>P01178</id>
    </interactant>
    <interactant intactId="EBI-10303987">
        <id>Q9UHG0</id>
        <label>DCDC2</label>
    </interactant>
    <organismsDiffer>false</organismsDiffer>
    <experiments>3</experiments>
</comment>
<comment type="subcellular location">
    <subcellularLocation>
        <location>Secreted</location>
    </subcellularLocation>
</comment>
<comment type="pharmaceutical">
    <text>Oxytocin is available under the names Pitocin (Parke-Davis) and Syntocinon (Sandoz). Used to artificially speed or induce labor.</text>
</comment>
<comment type="similarity">
    <text evidence="6">Belongs to the vasopressin/oxytocin family.</text>
</comment>
<comment type="online information" name="Wikipedia">
    <link uri="https://en.wikipedia.org/wiki/Oxytocin"/>
    <text>Oxytocin entry</text>
</comment>
<protein>
    <recommendedName>
        <fullName>Oxytocin-neurophysin 1</fullName>
        <shortName>OT-NPI</shortName>
    </recommendedName>
    <component>
        <recommendedName>
            <fullName>Oxytocin</fullName>
        </recommendedName>
        <alternativeName>
            <fullName>Ocytocin</fullName>
        </alternativeName>
    </component>
    <component>
        <recommendedName>
            <fullName>Neurophysin 1</fullName>
        </recommendedName>
    </component>
</protein>
<reference key="1">
    <citation type="journal article" date="1986" name="Biol. Chem. Hoppe-Seyler">
        <title>The neurohypophyseal hormones vasopressin and oxytocin. Precursor structure, synthesis and regulation.</title>
        <authorList>
            <person name="Rehbein M."/>
            <person name="Hillers M."/>
            <person name="Mohr E."/>
            <person name="Ivell R."/>
            <person name="Morley S."/>
            <person name="Schmale H."/>
            <person name="Richter D."/>
        </authorList>
    </citation>
    <scope>NUCLEOTIDE SEQUENCE [MRNA]</scope>
</reference>
<reference key="2">
    <citation type="journal article" date="1985" name="J. Biol. Chem.">
        <title>The human vasopressin gene is linked to the oxytocin gene and is selectively expressed in a cultured lung cancer cell line.</title>
        <authorList>
            <person name="Sausville E."/>
            <person name="Carney D."/>
            <person name="Battey J."/>
        </authorList>
    </citation>
    <scope>NUCLEOTIDE SEQUENCE [GENOMIC DNA]</scope>
</reference>
<reference key="3">
    <citation type="submission" date="2002-03" db="EMBL/GenBank/DDBJ databases">
        <title>Lack of sequence polymorphism in the oxytocin gene of autistic patients.</title>
        <authorList>
            <person name="Grunwald W.C. Jr."/>
            <person name="Cool D.R."/>
        </authorList>
    </citation>
    <scope>NUCLEOTIDE SEQUENCE [GENOMIC DNA]</scope>
</reference>
<reference key="4">
    <citation type="journal article" date="2001" name="Nature">
        <title>The DNA sequence and comparative analysis of human chromosome 20.</title>
        <authorList>
            <person name="Deloukas P."/>
            <person name="Matthews L.H."/>
            <person name="Ashurst J.L."/>
            <person name="Burton J."/>
            <person name="Gilbert J.G.R."/>
            <person name="Jones M."/>
            <person name="Stavrides G."/>
            <person name="Almeida J.P."/>
            <person name="Babbage A.K."/>
            <person name="Bagguley C.L."/>
            <person name="Bailey J."/>
            <person name="Barlow K.F."/>
            <person name="Bates K.N."/>
            <person name="Beard L.M."/>
            <person name="Beare D.M."/>
            <person name="Beasley O.P."/>
            <person name="Bird C.P."/>
            <person name="Blakey S.E."/>
            <person name="Bridgeman A.M."/>
            <person name="Brown A.J."/>
            <person name="Buck D."/>
            <person name="Burrill W.D."/>
            <person name="Butler A.P."/>
            <person name="Carder C."/>
            <person name="Carter N.P."/>
            <person name="Chapman J.C."/>
            <person name="Clamp M."/>
            <person name="Clark G."/>
            <person name="Clark L.N."/>
            <person name="Clark S.Y."/>
            <person name="Clee C.M."/>
            <person name="Clegg S."/>
            <person name="Cobley V.E."/>
            <person name="Collier R.E."/>
            <person name="Connor R.E."/>
            <person name="Corby N.R."/>
            <person name="Coulson A."/>
            <person name="Coville G.J."/>
            <person name="Deadman R."/>
            <person name="Dhami P.D."/>
            <person name="Dunn M."/>
            <person name="Ellington A.G."/>
            <person name="Frankland J.A."/>
            <person name="Fraser A."/>
            <person name="French L."/>
            <person name="Garner P."/>
            <person name="Grafham D.V."/>
            <person name="Griffiths C."/>
            <person name="Griffiths M.N.D."/>
            <person name="Gwilliam R."/>
            <person name="Hall R.E."/>
            <person name="Hammond S."/>
            <person name="Harley J.L."/>
            <person name="Heath P.D."/>
            <person name="Ho S."/>
            <person name="Holden J.L."/>
            <person name="Howden P.J."/>
            <person name="Huckle E."/>
            <person name="Hunt A.R."/>
            <person name="Hunt S.E."/>
            <person name="Jekosch K."/>
            <person name="Johnson C.M."/>
            <person name="Johnson D."/>
            <person name="Kay M.P."/>
            <person name="Kimberley A.M."/>
            <person name="King A."/>
            <person name="Knights A."/>
            <person name="Laird G.K."/>
            <person name="Lawlor S."/>
            <person name="Lehvaeslaiho M.H."/>
            <person name="Leversha M.A."/>
            <person name="Lloyd C."/>
            <person name="Lloyd D.M."/>
            <person name="Lovell J.D."/>
            <person name="Marsh V.L."/>
            <person name="Martin S.L."/>
            <person name="McConnachie L.J."/>
            <person name="McLay K."/>
            <person name="McMurray A.A."/>
            <person name="Milne S.A."/>
            <person name="Mistry D."/>
            <person name="Moore M.J.F."/>
            <person name="Mullikin J.C."/>
            <person name="Nickerson T."/>
            <person name="Oliver K."/>
            <person name="Parker A."/>
            <person name="Patel R."/>
            <person name="Pearce T.A.V."/>
            <person name="Peck A.I."/>
            <person name="Phillimore B.J.C.T."/>
            <person name="Prathalingam S.R."/>
            <person name="Plumb R.W."/>
            <person name="Ramsay H."/>
            <person name="Rice C.M."/>
            <person name="Ross M.T."/>
            <person name="Scott C.E."/>
            <person name="Sehra H.K."/>
            <person name="Shownkeen R."/>
            <person name="Sims S."/>
            <person name="Skuce C.D."/>
            <person name="Smith M.L."/>
            <person name="Soderlund C."/>
            <person name="Steward C.A."/>
            <person name="Sulston J.E."/>
            <person name="Swann R.M."/>
            <person name="Sycamore N."/>
            <person name="Taylor R."/>
            <person name="Tee L."/>
            <person name="Thomas D.W."/>
            <person name="Thorpe A."/>
            <person name="Tracey A."/>
            <person name="Tromans A.C."/>
            <person name="Vaudin M."/>
            <person name="Wall M."/>
            <person name="Wallis J.M."/>
            <person name="Whitehead S.L."/>
            <person name="Whittaker P."/>
            <person name="Willey D.L."/>
            <person name="Williams L."/>
            <person name="Williams S.A."/>
            <person name="Wilming L."/>
            <person name="Wray P.W."/>
            <person name="Hubbard T."/>
            <person name="Durbin R.M."/>
            <person name="Bentley D.R."/>
            <person name="Beck S."/>
            <person name="Rogers J."/>
        </authorList>
    </citation>
    <scope>NUCLEOTIDE SEQUENCE [LARGE SCALE GENOMIC DNA]</scope>
</reference>
<reference key="5">
    <citation type="journal article" date="2004" name="Genome Res.">
        <title>The status, quality, and expansion of the NIH full-length cDNA project: the Mammalian Gene Collection (MGC).</title>
        <authorList>
            <consortium name="The MGC Project Team"/>
        </authorList>
    </citation>
    <scope>NUCLEOTIDE SEQUENCE [LARGE SCALE MRNA]</scope>
    <source>
        <tissue>Lung</tissue>
    </source>
</reference>
<reference key="6">
    <citation type="journal article" date="1990" name="Endocrinology">
        <title>Expression of the oxytocin and vasopressin genes in human and baboon gonadal tissues.</title>
        <authorList>
            <person name="Ivell R."/>
            <person name="Furuya K."/>
            <person name="Brackmann B."/>
            <person name="Dawood Y."/>
            <person name="Khan-Dawood F."/>
        </authorList>
    </citation>
    <scope>NUCLEOTIDE SEQUENCE [MRNA] OF 25-110</scope>
</reference>
<reference key="7">
    <citation type="journal article" date="1985" name="FEBS Lett.">
        <title>Expression of the vasopressin and oxytocin genes in human hypothalami.</title>
        <authorList>
            <person name="Mohr E."/>
            <person name="Hillers M."/>
            <person name="Ivell R."/>
            <person name="Haulica I.D."/>
            <person name="Richter D."/>
        </authorList>
    </citation>
    <scope>NUCLEOTIDE SEQUENCE [MRNA] OF 80-125</scope>
</reference>
<reference key="8">
    <citation type="journal article" date="1983" name="Proc. Natl. Acad. Sci. U.S.A.">
        <title>Identification of human neurophysins: complete amino acid sequences of MSEL- and VLDV-neurophysins.</title>
        <authorList>
            <person name="Chauvet M.-T."/>
            <person name="Hurpet D."/>
            <person name="Chauvet J."/>
            <person name="Acher R."/>
        </authorList>
    </citation>
    <scope>PROTEIN SEQUENCE OF 32-125</scope>
</reference>
<reference key="9">
    <citation type="journal article" date="1981" name="FEBS Lett.">
        <title>A comparative study of mammalian neurophysin protein sequences.</title>
        <authorList>
            <person name="Schlesinger D.H."/>
            <person name="Audhya T.K."/>
        </authorList>
    </citation>
    <scope>PROTEIN SEQUENCE OF 32-125</scope>
</reference>
<reference key="10">
    <citation type="journal article" date="1958" name="Proc. Soc. Exp. Biol. Med.">
        <title>On the nature of oxytocin and vasopressin from human pituitary.</title>
        <authorList>
            <person name="Light A."/>
            <person name="du Vigneaud V."/>
        </authorList>
    </citation>
    <scope>PROTEIN SEQUENCE OF 20-28</scope>
    <scope>AMIDATION AT GLY-28</scope>
</reference>
<reference key="11">
    <citation type="journal article" date="2008" name="J. Biol. Chem.">
        <title>Conopressin-T from Conus tulipa reveals an antagonist switch in vasopressin-like peptides.</title>
        <authorList>
            <person name="Dutertre S."/>
            <person name="Croker D."/>
            <person name="Daly N.L."/>
            <person name="Andersson A."/>
            <person name="Muttenthaler M."/>
            <person name="Lumsden N.G."/>
            <person name="Craik D.J."/>
            <person name="Alewood P.F."/>
            <person name="Guillon G."/>
            <person name="Lewis R.J."/>
        </authorList>
    </citation>
    <scope>FUNCTION OF OXYTOCIN</scope>
    <scope>MUTAGENESIS OF GLY-28</scope>
    <scope>SUBUNIT</scope>
</reference>
<evidence type="ECO:0000250" key="1">
    <source>
        <dbReference type="UniProtKB" id="P01175"/>
    </source>
</evidence>
<evidence type="ECO:0000269" key="2">
    <source>
    </source>
</evidence>
<evidence type="ECO:0000269" key="3">
    <source>
    </source>
</evidence>
<evidence type="ECO:0000269" key="4">
    <source>
    </source>
</evidence>
<evidence type="ECO:0000269" key="5">
    <source>
    </source>
</evidence>
<evidence type="ECO:0000305" key="6"/>
<evidence type="ECO:0007829" key="7">
    <source>
        <dbReference type="PDB" id="7OFG"/>
    </source>
</evidence>
<sequence length="125" mass="12722">MAGPSLACCLLGLLALTSACYIQNCPLGGKRAAPDLDVRKCLPCGPGGKGRCFGPNICCAEELGCFVGTAEALRCQEENYLPSPCQSGQKACGSGGRCAVLGLCCSPDGCHADPACDAEATFSQR</sequence>
<accession>P01178</accession>
<accession>Q3MIG0</accession>
<organism>
    <name type="scientific">Homo sapiens</name>
    <name type="common">Human</name>
    <dbReference type="NCBI Taxonomy" id="9606"/>
    <lineage>
        <taxon>Eukaryota</taxon>
        <taxon>Metazoa</taxon>
        <taxon>Chordata</taxon>
        <taxon>Craniata</taxon>
        <taxon>Vertebrata</taxon>
        <taxon>Euteleostomi</taxon>
        <taxon>Mammalia</taxon>
        <taxon>Eutheria</taxon>
        <taxon>Euarchontoglires</taxon>
        <taxon>Primates</taxon>
        <taxon>Haplorrhini</taxon>
        <taxon>Catarrhini</taxon>
        <taxon>Hominidae</taxon>
        <taxon>Homo</taxon>
    </lineage>
</organism>
<name>NEU1_HUMAN</name>
<proteinExistence type="evidence at protein level"/>